<dbReference type="EC" id="4.1.2.13" evidence="1"/>
<dbReference type="EMBL" id="CP000730">
    <property type="protein sequence ID" value="ABX30585.1"/>
    <property type="molecule type" value="Genomic_DNA"/>
</dbReference>
<dbReference type="RefSeq" id="WP_001031413.1">
    <property type="nucleotide sequence ID" value="NC_010079.1"/>
</dbReference>
<dbReference type="SMR" id="A8Z3K5"/>
<dbReference type="KEGG" id="sax:USA300HOU_2599"/>
<dbReference type="HOGENOM" id="CLU_081560_0_0_9"/>
<dbReference type="UniPathway" id="UPA00109">
    <property type="reaction ID" value="UER00183"/>
</dbReference>
<dbReference type="GO" id="GO:0004332">
    <property type="term" value="F:fructose-bisphosphate aldolase activity"/>
    <property type="evidence" value="ECO:0007669"/>
    <property type="project" value="UniProtKB-UniRule"/>
</dbReference>
<dbReference type="GO" id="GO:0006096">
    <property type="term" value="P:glycolytic process"/>
    <property type="evidence" value="ECO:0007669"/>
    <property type="project" value="UniProtKB-UniRule"/>
</dbReference>
<dbReference type="Gene3D" id="3.20.20.70">
    <property type="entry name" value="Aldolase class I"/>
    <property type="match status" value="1"/>
</dbReference>
<dbReference type="HAMAP" id="MF_00729">
    <property type="entry name" value="FBP_aldolase_1"/>
    <property type="match status" value="1"/>
</dbReference>
<dbReference type="InterPro" id="IPR013785">
    <property type="entry name" value="Aldolase_TIM"/>
</dbReference>
<dbReference type="InterPro" id="IPR000741">
    <property type="entry name" value="FBA_I"/>
</dbReference>
<dbReference type="InterPro" id="IPR023014">
    <property type="entry name" value="FBA_I_Gram+-type"/>
</dbReference>
<dbReference type="NCBIfam" id="NF003784">
    <property type="entry name" value="PRK05377.1"/>
    <property type="match status" value="1"/>
</dbReference>
<dbReference type="PANTHER" id="PTHR11627">
    <property type="entry name" value="FRUCTOSE-BISPHOSPHATE ALDOLASE"/>
    <property type="match status" value="1"/>
</dbReference>
<dbReference type="Pfam" id="PF00274">
    <property type="entry name" value="Glycolytic"/>
    <property type="match status" value="1"/>
</dbReference>
<dbReference type="SUPFAM" id="SSF51569">
    <property type="entry name" value="Aldolase"/>
    <property type="match status" value="1"/>
</dbReference>
<sequence>MNKEQLEKMKNGKGFIAALDQSGGSTPKALKEYGVNEDQYSNEDEMFQLVHDMRTRVVTSPSFSPDKILGAILFEQTMDREVESKYTADYLADKGVVPFLKVDKGLAEEQNGVQLMKPIDNLDNLLDRANERHIFGTKMRSNILELNEQGIKDVVEQQFEVAKQIIAKGLVPIIEPEVNINAKDKAEIEKVLKAELKKGLDSLNADQLVMLKLTIPTEPNLYKELAEHPNVVRVVVLSGGYSREKANELLKDNAELIASFSRALASDLRADQSKEEFDKALGDAVESIYDASVNKN</sequence>
<evidence type="ECO:0000255" key="1">
    <source>
        <dbReference type="HAMAP-Rule" id="MF_00729"/>
    </source>
</evidence>
<accession>A8Z3K5</accession>
<organism>
    <name type="scientific">Staphylococcus aureus (strain USA300 / TCH1516)</name>
    <dbReference type="NCBI Taxonomy" id="451516"/>
    <lineage>
        <taxon>Bacteria</taxon>
        <taxon>Bacillati</taxon>
        <taxon>Bacillota</taxon>
        <taxon>Bacilli</taxon>
        <taxon>Bacillales</taxon>
        <taxon>Staphylococcaceae</taxon>
        <taxon>Staphylococcus</taxon>
    </lineage>
</organism>
<comment type="catalytic activity">
    <reaction evidence="1">
        <text>beta-D-fructose 1,6-bisphosphate = D-glyceraldehyde 3-phosphate + dihydroxyacetone phosphate</text>
        <dbReference type="Rhea" id="RHEA:14729"/>
        <dbReference type="ChEBI" id="CHEBI:32966"/>
        <dbReference type="ChEBI" id="CHEBI:57642"/>
        <dbReference type="ChEBI" id="CHEBI:59776"/>
        <dbReference type="EC" id="4.1.2.13"/>
    </reaction>
</comment>
<comment type="pathway">
    <text evidence="1">Carbohydrate degradation; glycolysis; D-glyceraldehyde 3-phosphate and glycerone phosphate from D-glucose: step 4/4.</text>
</comment>
<comment type="similarity">
    <text evidence="1">Belongs to the class I fructose-bisphosphate aldolase family.</text>
</comment>
<protein>
    <recommendedName>
        <fullName evidence="1">Fructose-bisphosphate aldolase class 1</fullName>
        <ecNumber evidence="1">4.1.2.13</ecNumber>
    </recommendedName>
    <alternativeName>
        <fullName>Fructose-bisphosphate aldolase class I</fullName>
        <shortName evidence="1">FBP aldolase</shortName>
    </alternativeName>
</protein>
<proteinExistence type="inferred from homology"/>
<keyword id="KW-0324">Glycolysis</keyword>
<keyword id="KW-0456">Lyase</keyword>
<keyword id="KW-0704">Schiff base</keyword>
<reference key="1">
    <citation type="journal article" date="2007" name="BMC Microbiol.">
        <title>Subtle genetic changes enhance virulence of methicillin resistant and sensitive Staphylococcus aureus.</title>
        <authorList>
            <person name="Highlander S.K."/>
            <person name="Hulten K.G."/>
            <person name="Qin X."/>
            <person name="Jiang H."/>
            <person name="Yerrapragada S."/>
            <person name="Mason E.O. Jr."/>
            <person name="Shang Y."/>
            <person name="Williams T.M."/>
            <person name="Fortunov R.M."/>
            <person name="Liu Y."/>
            <person name="Igboeli O."/>
            <person name="Petrosino J."/>
            <person name="Tirumalai M."/>
            <person name="Uzman A."/>
            <person name="Fox G.E."/>
            <person name="Cardenas A.M."/>
            <person name="Muzny D.M."/>
            <person name="Hemphill L."/>
            <person name="Ding Y."/>
            <person name="Dugan S."/>
            <person name="Blyth P.R."/>
            <person name="Buhay C.J."/>
            <person name="Dinh H.H."/>
            <person name="Hawes A.C."/>
            <person name="Holder M."/>
            <person name="Kovar C.L."/>
            <person name="Lee S.L."/>
            <person name="Liu W."/>
            <person name="Nazareth L.V."/>
            <person name="Wang Q."/>
            <person name="Zhou J."/>
            <person name="Kaplan S.L."/>
            <person name="Weinstock G.M."/>
        </authorList>
    </citation>
    <scope>NUCLEOTIDE SEQUENCE [LARGE SCALE GENOMIC DNA]</scope>
    <source>
        <strain>USA300 / TCH1516</strain>
    </source>
</reference>
<feature type="chain" id="PRO_1000083326" description="Fructose-bisphosphate aldolase class 1">
    <location>
        <begin position="1"/>
        <end position="296"/>
    </location>
</feature>
<feature type="active site" description="Proton acceptor" evidence="1">
    <location>
        <position position="175"/>
    </location>
</feature>
<feature type="active site" description="Schiff-base intermediate with dihydroxyacetone-P" evidence="1">
    <location>
        <position position="212"/>
    </location>
</feature>
<gene>
    <name evidence="1" type="primary">fda</name>
    <name type="ordered locus">USA300HOU_2599</name>
</gene>
<name>ALF1_STAAT</name>